<feature type="signal peptide" evidence="2">
    <location>
        <begin position="1"/>
        <end position="23"/>
    </location>
</feature>
<feature type="chain" id="PRO_0000233043" description="Peptidyl-prolyl cis-trans isomerase B">
    <location>
        <begin position="24"/>
        <end position="209"/>
    </location>
</feature>
<feature type="domain" description="PPIase cyclophilin-type" evidence="3">
    <location>
        <begin position="39"/>
        <end position="196"/>
    </location>
</feature>
<feature type="region of interest" description="Disordered" evidence="5">
    <location>
        <begin position="179"/>
        <end position="209"/>
    </location>
</feature>
<feature type="short sequence motif" description="Prevents secretion from ER">
    <location>
        <begin position="206"/>
        <end position="209"/>
    </location>
</feature>
<feature type="compositionally biased region" description="Basic and acidic residues" evidence="5">
    <location>
        <begin position="196"/>
        <end position="209"/>
    </location>
</feature>
<feature type="glycosylation site" description="N-linked (GlcNAc...) asparagine" evidence="2">
    <location>
        <position position="140"/>
    </location>
</feature>
<comment type="function">
    <text evidence="1">PPIases accelerate the folding of proteins. It catalyzes the cis-trans isomerization of proline imidic peptide bonds in oligopeptides (By similarity).</text>
</comment>
<comment type="catalytic activity">
    <reaction>
        <text>[protein]-peptidylproline (omega=180) = [protein]-peptidylproline (omega=0)</text>
        <dbReference type="Rhea" id="RHEA:16237"/>
        <dbReference type="Rhea" id="RHEA-COMP:10747"/>
        <dbReference type="Rhea" id="RHEA-COMP:10748"/>
        <dbReference type="ChEBI" id="CHEBI:83833"/>
        <dbReference type="ChEBI" id="CHEBI:83834"/>
        <dbReference type="EC" id="5.2.1.8"/>
    </reaction>
</comment>
<comment type="activity regulation">
    <text evidence="1">Inhibited by cyclosporin A (CsA).</text>
</comment>
<comment type="subcellular location">
    <subcellularLocation>
        <location evidence="4">Endoplasmic reticulum lumen</location>
    </subcellularLocation>
</comment>
<comment type="similarity">
    <text evidence="6">Belongs to the cyclophilin-type PPIase family. PPIase B subfamily.</text>
</comment>
<protein>
    <recommendedName>
        <fullName>Peptidyl-prolyl cis-trans isomerase B</fullName>
        <shortName>PPIase B</shortName>
        <ecNumber>5.2.1.8</ecNumber>
    </recommendedName>
    <alternativeName>
        <fullName>Rotamase B</fullName>
    </alternativeName>
</protein>
<name>PPIB_ASPFU</name>
<proteinExistence type="inferred from homology"/>
<keyword id="KW-0256">Endoplasmic reticulum</keyword>
<keyword id="KW-0325">Glycoprotein</keyword>
<keyword id="KW-0413">Isomerase</keyword>
<keyword id="KW-1185">Reference proteome</keyword>
<keyword id="KW-0697">Rotamase</keyword>
<keyword id="KW-0732">Signal</keyword>
<sequence length="209" mass="22960">MNFKSLFLSFFLVFAVGLALVHAEETKEPRGPKITSKVFFDIEHGDKPLGRIVLGLYGKTVPKTAENFRALATGEKGFGYEGSTFHRVIKSFMIQGGDFTRGDGTGGKSIYGEKFADENFKLRHTRKGLLSMANAGKDTNGSQFFITTVPTPWLDGRHVVFGEVLEGYEVVEQIENVPKGPGDKPAETVKIVKSGQIKDESTKGSHEEL</sequence>
<gene>
    <name type="primary">cpr2</name>
    <name type="ORF">AFUA_4G07650</name>
</gene>
<organism>
    <name type="scientific">Aspergillus fumigatus (strain ATCC MYA-4609 / CBS 101355 / FGSC A1100 / Af293)</name>
    <name type="common">Neosartorya fumigata</name>
    <dbReference type="NCBI Taxonomy" id="330879"/>
    <lineage>
        <taxon>Eukaryota</taxon>
        <taxon>Fungi</taxon>
        <taxon>Dikarya</taxon>
        <taxon>Ascomycota</taxon>
        <taxon>Pezizomycotina</taxon>
        <taxon>Eurotiomycetes</taxon>
        <taxon>Eurotiomycetidae</taxon>
        <taxon>Eurotiales</taxon>
        <taxon>Aspergillaceae</taxon>
        <taxon>Aspergillus</taxon>
        <taxon>Aspergillus subgen. Fumigati</taxon>
    </lineage>
</organism>
<dbReference type="EC" id="5.2.1.8"/>
<dbReference type="EMBL" id="AAHF01000005">
    <property type="protein sequence ID" value="EAL90022.1"/>
    <property type="molecule type" value="Genomic_DNA"/>
</dbReference>
<dbReference type="RefSeq" id="XP_752060.1">
    <property type="nucleotide sequence ID" value="XM_746967.1"/>
</dbReference>
<dbReference type="SMR" id="Q4WP12"/>
<dbReference type="STRING" id="330879.Q4WP12"/>
<dbReference type="GlyCosmos" id="Q4WP12">
    <property type="glycosylation" value="1 site, No reported glycans"/>
</dbReference>
<dbReference type="EnsemblFungi" id="EAL90022">
    <property type="protein sequence ID" value="EAL90022"/>
    <property type="gene ID" value="AFUA_4G07650"/>
</dbReference>
<dbReference type="GeneID" id="3509715"/>
<dbReference type="KEGG" id="afm:AFUA_4G07650"/>
<dbReference type="VEuPathDB" id="FungiDB:Afu4g07650"/>
<dbReference type="eggNOG" id="KOG0880">
    <property type="taxonomic scope" value="Eukaryota"/>
</dbReference>
<dbReference type="HOGENOM" id="CLU_012062_4_1_1"/>
<dbReference type="InParanoid" id="Q4WP12"/>
<dbReference type="OMA" id="HPGDRPK"/>
<dbReference type="OrthoDB" id="193499at2759"/>
<dbReference type="Proteomes" id="UP000002530">
    <property type="component" value="Chromosome 4"/>
</dbReference>
<dbReference type="GO" id="GO:0005737">
    <property type="term" value="C:cytoplasm"/>
    <property type="evidence" value="ECO:0000318"/>
    <property type="project" value="GO_Central"/>
</dbReference>
<dbReference type="GO" id="GO:0005783">
    <property type="term" value="C:endoplasmic reticulum"/>
    <property type="evidence" value="ECO:0000318"/>
    <property type="project" value="GO_Central"/>
</dbReference>
<dbReference type="GO" id="GO:0005788">
    <property type="term" value="C:endoplasmic reticulum lumen"/>
    <property type="evidence" value="ECO:0007669"/>
    <property type="project" value="UniProtKB-SubCell"/>
</dbReference>
<dbReference type="GO" id="GO:0016018">
    <property type="term" value="F:cyclosporin A binding"/>
    <property type="evidence" value="ECO:0000318"/>
    <property type="project" value="GO_Central"/>
</dbReference>
<dbReference type="GO" id="GO:0003755">
    <property type="term" value="F:peptidyl-prolyl cis-trans isomerase activity"/>
    <property type="evidence" value="ECO:0000318"/>
    <property type="project" value="GO_Central"/>
</dbReference>
<dbReference type="GO" id="GO:0006457">
    <property type="term" value="P:protein folding"/>
    <property type="evidence" value="ECO:0000318"/>
    <property type="project" value="GO_Central"/>
</dbReference>
<dbReference type="CDD" id="cd01926">
    <property type="entry name" value="cyclophilin_ABH_like"/>
    <property type="match status" value="1"/>
</dbReference>
<dbReference type="FunFam" id="2.40.100.10:FF:000001">
    <property type="entry name" value="Peptidyl-prolyl cis-trans isomerase"/>
    <property type="match status" value="1"/>
</dbReference>
<dbReference type="Gene3D" id="2.40.100.10">
    <property type="entry name" value="Cyclophilin-like"/>
    <property type="match status" value="1"/>
</dbReference>
<dbReference type="InterPro" id="IPR029000">
    <property type="entry name" value="Cyclophilin-like_dom_sf"/>
</dbReference>
<dbReference type="InterPro" id="IPR020892">
    <property type="entry name" value="Cyclophilin-type_PPIase_CS"/>
</dbReference>
<dbReference type="InterPro" id="IPR002130">
    <property type="entry name" value="Cyclophilin-type_PPIase_dom"/>
</dbReference>
<dbReference type="PANTHER" id="PTHR11071">
    <property type="entry name" value="PEPTIDYL-PROLYL CIS-TRANS ISOMERASE"/>
    <property type="match status" value="1"/>
</dbReference>
<dbReference type="PANTHER" id="PTHR11071:SF561">
    <property type="entry name" value="PEPTIDYL-PROLYL CIS-TRANS ISOMERASE D-RELATED"/>
    <property type="match status" value="1"/>
</dbReference>
<dbReference type="Pfam" id="PF00160">
    <property type="entry name" value="Pro_isomerase"/>
    <property type="match status" value="1"/>
</dbReference>
<dbReference type="PRINTS" id="PR00153">
    <property type="entry name" value="CSAPPISMRASE"/>
</dbReference>
<dbReference type="SUPFAM" id="SSF50891">
    <property type="entry name" value="Cyclophilin-like"/>
    <property type="match status" value="1"/>
</dbReference>
<dbReference type="PROSITE" id="PS00170">
    <property type="entry name" value="CSA_PPIASE_1"/>
    <property type="match status" value="1"/>
</dbReference>
<dbReference type="PROSITE" id="PS50072">
    <property type="entry name" value="CSA_PPIASE_2"/>
    <property type="match status" value="1"/>
</dbReference>
<dbReference type="PROSITE" id="PS00014">
    <property type="entry name" value="ER_TARGET"/>
    <property type="match status" value="1"/>
</dbReference>
<accession>Q4WP12</accession>
<reference key="1">
    <citation type="journal article" date="2005" name="Nature">
        <title>Genomic sequence of the pathogenic and allergenic filamentous fungus Aspergillus fumigatus.</title>
        <authorList>
            <person name="Nierman W.C."/>
            <person name="Pain A."/>
            <person name="Anderson M.J."/>
            <person name="Wortman J.R."/>
            <person name="Kim H.S."/>
            <person name="Arroyo J."/>
            <person name="Berriman M."/>
            <person name="Abe K."/>
            <person name="Archer D.B."/>
            <person name="Bermejo C."/>
            <person name="Bennett J.W."/>
            <person name="Bowyer P."/>
            <person name="Chen D."/>
            <person name="Collins M."/>
            <person name="Coulsen R."/>
            <person name="Davies R."/>
            <person name="Dyer P.S."/>
            <person name="Farman M.L."/>
            <person name="Fedorova N."/>
            <person name="Fedorova N.D."/>
            <person name="Feldblyum T.V."/>
            <person name="Fischer R."/>
            <person name="Fosker N."/>
            <person name="Fraser A."/>
            <person name="Garcia J.L."/>
            <person name="Garcia M.J."/>
            <person name="Goble A."/>
            <person name="Goldman G.H."/>
            <person name="Gomi K."/>
            <person name="Griffith-Jones S."/>
            <person name="Gwilliam R."/>
            <person name="Haas B.J."/>
            <person name="Haas H."/>
            <person name="Harris D.E."/>
            <person name="Horiuchi H."/>
            <person name="Huang J."/>
            <person name="Humphray S."/>
            <person name="Jimenez J."/>
            <person name="Keller N."/>
            <person name="Khouri H."/>
            <person name="Kitamoto K."/>
            <person name="Kobayashi T."/>
            <person name="Konzack S."/>
            <person name="Kulkarni R."/>
            <person name="Kumagai T."/>
            <person name="Lafton A."/>
            <person name="Latge J.-P."/>
            <person name="Li W."/>
            <person name="Lord A."/>
            <person name="Lu C."/>
            <person name="Majoros W.H."/>
            <person name="May G.S."/>
            <person name="Miller B.L."/>
            <person name="Mohamoud Y."/>
            <person name="Molina M."/>
            <person name="Monod M."/>
            <person name="Mouyna I."/>
            <person name="Mulligan S."/>
            <person name="Murphy L.D."/>
            <person name="O'Neil S."/>
            <person name="Paulsen I."/>
            <person name="Penalva M.A."/>
            <person name="Pertea M."/>
            <person name="Price C."/>
            <person name="Pritchard B.L."/>
            <person name="Quail M.A."/>
            <person name="Rabbinowitsch E."/>
            <person name="Rawlins N."/>
            <person name="Rajandream M.A."/>
            <person name="Reichard U."/>
            <person name="Renauld H."/>
            <person name="Robson G.D."/>
            <person name="Rodriguez de Cordoba S."/>
            <person name="Rodriguez-Pena J.M."/>
            <person name="Ronning C.M."/>
            <person name="Rutter S."/>
            <person name="Salzberg S.L."/>
            <person name="Sanchez M."/>
            <person name="Sanchez-Ferrero J.C."/>
            <person name="Saunders D."/>
            <person name="Seeger K."/>
            <person name="Squares R."/>
            <person name="Squares S."/>
            <person name="Takeuchi M."/>
            <person name="Tekaia F."/>
            <person name="Turner G."/>
            <person name="Vazquez de Aldana C.R."/>
            <person name="Weidman J."/>
            <person name="White O."/>
            <person name="Woodward J.R."/>
            <person name="Yu J.-H."/>
            <person name="Fraser C.M."/>
            <person name="Galagan J.E."/>
            <person name="Asai K."/>
            <person name="Machida M."/>
            <person name="Hall N."/>
            <person name="Barrell B.G."/>
            <person name="Denning D.W."/>
        </authorList>
    </citation>
    <scope>NUCLEOTIDE SEQUENCE [LARGE SCALE GENOMIC DNA]</scope>
    <source>
        <strain>ATCC MYA-4609 / CBS 101355 / FGSC A1100 / Af293</strain>
    </source>
</reference>
<evidence type="ECO:0000250" key="1"/>
<evidence type="ECO:0000255" key="2"/>
<evidence type="ECO:0000255" key="3">
    <source>
        <dbReference type="PROSITE-ProRule" id="PRU00156"/>
    </source>
</evidence>
<evidence type="ECO:0000255" key="4">
    <source>
        <dbReference type="PROSITE-ProRule" id="PRU10138"/>
    </source>
</evidence>
<evidence type="ECO:0000256" key="5">
    <source>
        <dbReference type="SAM" id="MobiDB-lite"/>
    </source>
</evidence>
<evidence type="ECO:0000305" key="6"/>